<name>NUSB_NEIMB</name>
<feature type="chain" id="PRO_0000176559" description="Transcription antitermination protein NusB">
    <location>
        <begin position="1"/>
        <end position="141"/>
    </location>
</feature>
<reference key="1">
    <citation type="journal article" date="2000" name="Science">
        <title>Complete genome sequence of Neisseria meningitidis serogroup B strain MC58.</title>
        <authorList>
            <person name="Tettelin H."/>
            <person name="Saunders N.J."/>
            <person name="Heidelberg J.F."/>
            <person name="Jeffries A.C."/>
            <person name="Nelson K.E."/>
            <person name="Eisen J.A."/>
            <person name="Ketchum K.A."/>
            <person name="Hood D.W."/>
            <person name="Peden J.F."/>
            <person name="Dodson R.J."/>
            <person name="Nelson W.C."/>
            <person name="Gwinn M.L."/>
            <person name="DeBoy R.T."/>
            <person name="Peterson J.D."/>
            <person name="Hickey E.K."/>
            <person name="Haft D.H."/>
            <person name="Salzberg S.L."/>
            <person name="White O."/>
            <person name="Fleischmann R.D."/>
            <person name="Dougherty B.A."/>
            <person name="Mason T.M."/>
            <person name="Ciecko A."/>
            <person name="Parksey D.S."/>
            <person name="Blair E."/>
            <person name="Cittone H."/>
            <person name="Clark E.B."/>
            <person name="Cotton M.D."/>
            <person name="Utterback T.R."/>
            <person name="Khouri H.M."/>
            <person name="Qin H."/>
            <person name="Vamathevan J.J."/>
            <person name="Gill J."/>
            <person name="Scarlato V."/>
            <person name="Masignani V."/>
            <person name="Pizza M."/>
            <person name="Grandi G."/>
            <person name="Sun L."/>
            <person name="Smith H.O."/>
            <person name="Fraser C.M."/>
            <person name="Moxon E.R."/>
            <person name="Rappuoli R."/>
            <person name="Venter J.C."/>
        </authorList>
    </citation>
    <scope>NUCLEOTIDE SEQUENCE [LARGE SCALE GENOMIC DNA]</scope>
    <source>
        <strain>ATCC BAA-335 / MC58</strain>
    </source>
</reference>
<gene>
    <name evidence="1" type="primary">nusB</name>
    <name type="ordered locus">NMB0683</name>
</gene>
<keyword id="KW-1185">Reference proteome</keyword>
<keyword id="KW-0694">RNA-binding</keyword>
<keyword id="KW-0804">Transcription</keyword>
<keyword id="KW-0889">Transcription antitermination</keyword>
<keyword id="KW-0805">Transcription regulation</keyword>
<proteinExistence type="inferred from homology"/>
<evidence type="ECO:0000255" key="1">
    <source>
        <dbReference type="HAMAP-Rule" id="MF_00073"/>
    </source>
</evidence>
<comment type="function">
    <text evidence="1">Involved in transcription antitermination. Required for transcription of ribosomal RNA (rRNA) genes. Binds specifically to the boxA antiterminator sequence of the ribosomal RNA (rrn) operons.</text>
</comment>
<comment type="similarity">
    <text evidence="1">Belongs to the NusB family.</text>
</comment>
<sequence>MKTARRRSRELAVQAVYQSLINRTAAPEIAKNIREMSDFAKADEELFNKLFFGTQTNAAEYIRQIRPLLDRDEKDLNPIERAVLLTACHELSAMPETPYPVIINEAIEVTKTFGGTDGHKFVNGILDKLAAQIRPDEPKRR</sequence>
<dbReference type="EMBL" id="AE002098">
    <property type="protein sequence ID" value="AAF41101.1"/>
    <property type="molecule type" value="Genomic_DNA"/>
</dbReference>
<dbReference type="PIR" id="A81172">
    <property type="entry name" value="A81172"/>
</dbReference>
<dbReference type="RefSeq" id="NP_273725.1">
    <property type="nucleotide sequence ID" value="NC_003112.2"/>
</dbReference>
<dbReference type="RefSeq" id="WP_002214168.1">
    <property type="nucleotide sequence ID" value="NC_003112.2"/>
</dbReference>
<dbReference type="SMR" id="Q9K0D0"/>
<dbReference type="FunCoup" id="Q9K0D0">
    <property type="interactions" value="342"/>
</dbReference>
<dbReference type="STRING" id="122586.NMB0683"/>
<dbReference type="PaxDb" id="122586-NMB0683"/>
<dbReference type="GeneID" id="84020692"/>
<dbReference type="KEGG" id="nme:NMB0683"/>
<dbReference type="PATRIC" id="fig|122586.8.peg.857"/>
<dbReference type="HOGENOM" id="CLU_087843_4_1_4"/>
<dbReference type="InParanoid" id="Q9K0D0"/>
<dbReference type="OrthoDB" id="9789556at2"/>
<dbReference type="Proteomes" id="UP000000425">
    <property type="component" value="Chromosome"/>
</dbReference>
<dbReference type="GO" id="GO:0005829">
    <property type="term" value="C:cytosol"/>
    <property type="evidence" value="ECO:0000318"/>
    <property type="project" value="GO_Central"/>
</dbReference>
<dbReference type="GO" id="GO:0003723">
    <property type="term" value="F:RNA binding"/>
    <property type="evidence" value="ECO:0007669"/>
    <property type="project" value="UniProtKB-UniRule"/>
</dbReference>
<dbReference type="GO" id="GO:0006353">
    <property type="term" value="P:DNA-templated transcription termination"/>
    <property type="evidence" value="ECO:0007669"/>
    <property type="project" value="UniProtKB-UniRule"/>
</dbReference>
<dbReference type="GO" id="GO:0031564">
    <property type="term" value="P:transcription antitermination"/>
    <property type="evidence" value="ECO:0007669"/>
    <property type="project" value="UniProtKB-KW"/>
</dbReference>
<dbReference type="FunFam" id="1.10.940.10:FF:000010">
    <property type="entry name" value="Transcription antitermination protein NusB"/>
    <property type="match status" value="1"/>
</dbReference>
<dbReference type="Gene3D" id="1.10.940.10">
    <property type="entry name" value="NusB-like"/>
    <property type="match status" value="1"/>
</dbReference>
<dbReference type="HAMAP" id="MF_00073">
    <property type="entry name" value="NusB"/>
    <property type="match status" value="1"/>
</dbReference>
<dbReference type="InterPro" id="IPR035926">
    <property type="entry name" value="NusB-like_sf"/>
</dbReference>
<dbReference type="InterPro" id="IPR011605">
    <property type="entry name" value="NusB_fam"/>
</dbReference>
<dbReference type="InterPro" id="IPR006027">
    <property type="entry name" value="NusB_RsmB_TIM44"/>
</dbReference>
<dbReference type="NCBIfam" id="TIGR01951">
    <property type="entry name" value="nusB"/>
    <property type="match status" value="1"/>
</dbReference>
<dbReference type="PANTHER" id="PTHR11078:SF3">
    <property type="entry name" value="ANTITERMINATION NUSB DOMAIN-CONTAINING PROTEIN"/>
    <property type="match status" value="1"/>
</dbReference>
<dbReference type="PANTHER" id="PTHR11078">
    <property type="entry name" value="N UTILIZATION SUBSTANCE PROTEIN B-RELATED"/>
    <property type="match status" value="1"/>
</dbReference>
<dbReference type="Pfam" id="PF01029">
    <property type="entry name" value="NusB"/>
    <property type="match status" value="1"/>
</dbReference>
<dbReference type="SUPFAM" id="SSF48013">
    <property type="entry name" value="NusB-like"/>
    <property type="match status" value="1"/>
</dbReference>
<accession>Q9K0D0</accession>
<protein>
    <recommendedName>
        <fullName evidence="1">Transcription antitermination protein NusB</fullName>
    </recommendedName>
    <alternativeName>
        <fullName evidence="1">Antitermination factor NusB</fullName>
    </alternativeName>
</protein>
<organism>
    <name type="scientific">Neisseria meningitidis serogroup B (strain ATCC BAA-335 / MC58)</name>
    <dbReference type="NCBI Taxonomy" id="122586"/>
    <lineage>
        <taxon>Bacteria</taxon>
        <taxon>Pseudomonadati</taxon>
        <taxon>Pseudomonadota</taxon>
        <taxon>Betaproteobacteria</taxon>
        <taxon>Neisseriales</taxon>
        <taxon>Neisseriaceae</taxon>
        <taxon>Neisseria</taxon>
    </lineage>
</organism>